<gene>
    <name evidence="1" type="primary">cysS</name>
    <name type="ordered locus">KPK_4197</name>
</gene>
<feature type="chain" id="PRO_1000090847" description="Cysteine--tRNA ligase">
    <location>
        <begin position="1"/>
        <end position="461"/>
    </location>
</feature>
<feature type="short sequence motif" description="'HIGH' region">
    <location>
        <begin position="30"/>
        <end position="40"/>
    </location>
</feature>
<feature type="short sequence motif" description="'KMSKS' region">
    <location>
        <begin position="266"/>
        <end position="270"/>
    </location>
</feature>
<feature type="binding site" evidence="1">
    <location>
        <position position="28"/>
    </location>
    <ligand>
        <name>Zn(2+)</name>
        <dbReference type="ChEBI" id="CHEBI:29105"/>
    </ligand>
</feature>
<feature type="binding site" evidence="1">
    <location>
        <position position="209"/>
    </location>
    <ligand>
        <name>Zn(2+)</name>
        <dbReference type="ChEBI" id="CHEBI:29105"/>
    </ligand>
</feature>
<feature type="binding site" evidence="1">
    <location>
        <position position="234"/>
    </location>
    <ligand>
        <name>Zn(2+)</name>
        <dbReference type="ChEBI" id="CHEBI:29105"/>
    </ligand>
</feature>
<feature type="binding site" evidence="1">
    <location>
        <position position="238"/>
    </location>
    <ligand>
        <name>Zn(2+)</name>
        <dbReference type="ChEBI" id="CHEBI:29105"/>
    </ligand>
</feature>
<feature type="binding site" evidence="1">
    <location>
        <position position="269"/>
    </location>
    <ligand>
        <name>ATP</name>
        <dbReference type="ChEBI" id="CHEBI:30616"/>
    </ligand>
</feature>
<comment type="catalytic activity">
    <reaction evidence="1">
        <text>tRNA(Cys) + L-cysteine + ATP = L-cysteinyl-tRNA(Cys) + AMP + diphosphate</text>
        <dbReference type="Rhea" id="RHEA:17773"/>
        <dbReference type="Rhea" id="RHEA-COMP:9661"/>
        <dbReference type="Rhea" id="RHEA-COMP:9679"/>
        <dbReference type="ChEBI" id="CHEBI:30616"/>
        <dbReference type="ChEBI" id="CHEBI:33019"/>
        <dbReference type="ChEBI" id="CHEBI:35235"/>
        <dbReference type="ChEBI" id="CHEBI:78442"/>
        <dbReference type="ChEBI" id="CHEBI:78517"/>
        <dbReference type="ChEBI" id="CHEBI:456215"/>
        <dbReference type="EC" id="6.1.1.16"/>
    </reaction>
</comment>
<comment type="cofactor">
    <cofactor evidence="1">
        <name>Zn(2+)</name>
        <dbReference type="ChEBI" id="CHEBI:29105"/>
    </cofactor>
    <text evidence="1">Binds 1 zinc ion per subunit.</text>
</comment>
<comment type="subunit">
    <text evidence="1">Monomer.</text>
</comment>
<comment type="subcellular location">
    <subcellularLocation>
        <location evidence="1">Cytoplasm</location>
    </subcellularLocation>
</comment>
<comment type="similarity">
    <text evidence="1">Belongs to the class-I aminoacyl-tRNA synthetase family.</text>
</comment>
<accession>B5Y0K6</accession>
<reference key="1">
    <citation type="journal article" date="2008" name="PLoS Genet.">
        <title>Complete genome sequence of the N2-fixing broad host range endophyte Klebsiella pneumoniae 342 and virulence predictions verified in mice.</title>
        <authorList>
            <person name="Fouts D.E."/>
            <person name="Tyler H.L."/>
            <person name="DeBoy R.T."/>
            <person name="Daugherty S."/>
            <person name="Ren Q."/>
            <person name="Badger J.H."/>
            <person name="Durkin A.S."/>
            <person name="Huot H."/>
            <person name="Shrivastava S."/>
            <person name="Kothari S."/>
            <person name="Dodson R.J."/>
            <person name="Mohamoud Y."/>
            <person name="Khouri H."/>
            <person name="Roesch L.F.W."/>
            <person name="Krogfelt K.A."/>
            <person name="Struve C."/>
            <person name="Triplett E.W."/>
            <person name="Methe B.A."/>
        </authorList>
    </citation>
    <scope>NUCLEOTIDE SEQUENCE [LARGE SCALE GENOMIC DNA]</scope>
    <source>
        <strain>342</strain>
    </source>
</reference>
<protein>
    <recommendedName>
        <fullName evidence="1">Cysteine--tRNA ligase</fullName>
        <ecNumber evidence="1">6.1.1.16</ecNumber>
    </recommendedName>
    <alternativeName>
        <fullName evidence="1">Cysteinyl-tRNA synthetase</fullName>
        <shortName evidence="1">CysRS</shortName>
    </alternativeName>
</protein>
<organism>
    <name type="scientific">Klebsiella pneumoniae (strain 342)</name>
    <dbReference type="NCBI Taxonomy" id="507522"/>
    <lineage>
        <taxon>Bacteria</taxon>
        <taxon>Pseudomonadati</taxon>
        <taxon>Pseudomonadota</taxon>
        <taxon>Gammaproteobacteria</taxon>
        <taxon>Enterobacterales</taxon>
        <taxon>Enterobacteriaceae</taxon>
        <taxon>Klebsiella/Raoultella group</taxon>
        <taxon>Klebsiella</taxon>
        <taxon>Klebsiella pneumoniae complex</taxon>
    </lineage>
</organism>
<keyword id="KW-0030">Aminoacyl-tRNA synthetase</keyword>
<keyword id="KW-0067">ATP-binding</keyword>
<keyword id="KW-0963">Cytoplasm</keyword>
<keyword id="KW-0436">Ligase</keyword>
<keyword id="KW-0479">Metal-binding</keyword>
<keyword id="KW-0547">Nucleotide-binding</keyword>
<keyword id="KW-0648">Protein biosynthesis</keyword>
<keyword id="KW-0862">Zinc</keyword>
<dbReference type="EC" id="6.1.1.16" evidence="1"/>
<dbReference type="EMBL" id="CP000964">
    <property type="protein sequence ID" value="ACI09301.1"/>
    <property type="molecule type" value="Genomic_DNA"/>
</dbReference>
<dbReference type="SMR" id="B5Y0K6"/>
<dbReference type="KEGG" id="kpe:KPK_4197"/>
<dbReference type="HOGENOM" id="CLU_013528_0_1_6"/>
<dbReference type="Proteomes" id="UP000001734">
    <property type="component" value="Chromosome"/>
</dbReference>
<dbReference type="GO" id="GO:0005829">
    <property type="term" value="C:cytosol"/>
    <property type="evidence" value="ECO:0007669"/>
    <property type="project" value="TreeGrafter"/>
</dbReference>
<dbReference type="GO" id="GO:0005524">
    <property type="term" value="F:ATP binding"/>
    <property type="evidence" value="ECO:0007669"/>
    <property type="project" value="UniProtKB-UniRule"/>
</dbReference>
<dbReference type="GO" id="GO:0004817">
    <property type="term" value="F:cysteine-tRNA ligase activity"/>
    <property type="evidence" value="ECO:0007669"/>
    <property type="project" value="UniProtKB-UniRule"/>
</dbReference>
<dbReference type="GO" id="GO:0008270">
    <property type="term" value="F:zinc ion binding"/>
    <property type="evidence" value="ECO:0007669"/>
    <property type="project" value="UniProtKB-UniRule"/>
</dbReference>
<dbReference type="GO" id="GO:0006423">
    <property type="term" value="P:cysteinyl-tRNA aminoacylation"/>
    <property type="evidence" value="ECO:0007669"/>
    <property type="project" value="UniProtKB-UniRule"/>
</dbReference>
<dbReference type="CDD" id="cd07963">
    <property type="entry name" value="Anticodon_Ia_Cys"/>
    <property type="match status" value="1"/>
</dbReference>
<dbReference type="CDD" id="cd00672">
    <property type="entry name" value="CysRS_core"/>
    <property type="match status" value="1"/>
</dbReference>
<dbReference type="FunFam" id="1.20.120.1910:FF:000001">
    <property type="entry name" value="Cysteine--tRNA ligase"/>
    <property type="match status" value="1"/>
</dbReference>
<dbReference type="FunFam" id="3.40.50.620:FF:000009">
    <property type="entry name" value="Cysteine--tRNA ligase"/>
    <property type="match status" value="1"/>
</dbReference>
<dbReference type="Gene3D" id="1.20.120.1910">
    <property type="entry name" value="Cysteine-tRNA ligase, C-terminal anti-codon recognition domain"/>
    <property type="match status" value="1"/>
</dbReference>
<dbReference type="Gene3D" id="3.40.50.620">
    <property type="entry name" value="HUPs"/>
    <property type="match status" value="1"/>
</dbReference>
<dbReference type="HAMAP" id="MF_00041">
    <property type="entry name" value="Cys_tRNA_synth"/>
    <property type="match status" value="1"/>
</dbReference>
<dbReference type="InterPro" id="IPR015803">
    <property type="entry name" value="Cys-tRNA-ligase"/>
</dbReference>
<dbReference type="InterPro" id="IPR015273">
    <property type="entry name" value="Cys-tRNA-synt_Ia_DALR"/>
</dbReference>
<dbReference type="InterPro" id="IPR024909">
    <property type="entry name" value="Cys-tRNA/MSH_ligase"/>
</dbReference>
<dbReference type="InterPro" id="IPR056411">
    <property type="entry name" value="CysS_C"/>
</dbReference>
<dbReference type="InterPro" id="IPR014729">
    <property type="entry name" value="Rossmann-like_a/b/a_fold"/>
</dbReference>
<dbReference type="InterPro" id="IPR032678">
    <property type="entry name" value="tRNA-synt_1_cat_dom"/>
</dbReference>
<dbReference type="InterPro" id="IPR009080">
    <property type="entry name" value="tRNAsynth_Ia_anticodon-bd"/>
</dbReference>
<dbReference type="NCBIfam" id="TIGR00435">
    <property type="entry name" value="cysS"/>
    <property type="match status" value="1"/>
</dbReference>
<dbReference type="PANTHER" id="PTHR10890:SF3">
    <property type="entry name" value="CYSTEINE--TRNA LIGASE, CYTOPLASMIC"/>
    <property type="match status" value="1"/>
</dbReference>
<dbReference type="PANTHER" id="PTHR10890">
    <property type="entry name" value="CYSTEINYL-TRNA SYNTHETASE"/>
    <property type="match status" value="1"/>
</dbReference>
<dbReference type="Pfam" id="PF23493">
    <property type="entry name" value="CysS_C"/>
    <property type="match status" value="1"/>
</dbReference>
<dbReference type="Pfam" id="PF09190">
    <property type="entry name" value="DALR_2"/>
    <property type="match status" value="1"/>
</dbReference>
<dbReference type="Pfam" id="PF01406">
    <property type="entry name" value="tRNA-synt_1e"/>
    <property type="match status" value="1"/>
</dbReference>
<dbReference type="PRINTS" id="PR00983">
    <property type="entry name" value="TRNASYNTHCYS"/>
</dbReference>
<dbReference type="SMART" id="SM00840">
    <property type="entry name" value="DALR_2"/>
    <property type="match status" value="1"/>
</dbReference>
<dbReference type="SUPFAM" id="SSF47323">
    <property type="entry name" value="Anticodon-binding domain of a subclass of class I aminoacyl-tRNA synthetases"/>
    <property type="match status" value="1"/>
</dbReference>
<dbReference type="SUPFAM" id="SSF52374">
    <property type="entry name" value="Nucleotidylyl transferase"/>
    <property type="match status" value="1"/>
</dbReference>
<proteinExistence type="inferred from homology"/>
<sequence>MLKIFNTLTRQKEEFKPIHAGEVGMYVCGITVYDLCHIGHGRTFVSFDVVARYLRFLGYKLKYVRNITDIDDKIIKRANENGESFVALVDRMIAEMHKDFDALNILRPDSEPRATHHIAEIIEITEQLIAKGHAYVADNGDVMFDVPTDPNYGLLSRQDLDQLQAGARVDVVDVKRNPMDFVLWKMSKEGEPSWPSPWGAGRPGWHIECSAMNCKQLGNHFDIHGGGSDLMFPHHENEIAQSTCAHDGEYVNYWMHSGMVMVDREKMSKSLGNFFTVRDVLKYYDAETIRYFLMSGHYRSQLNYSEENLKQARSALERLYTALRGTDKSVDAAGGEAFEARFIEAMDDDFNTPEAYSVLFDMAREVNRLKTEDAAAANAMAAHLRKLAAVLGLLEQEPEAFLQSGAQVDDAEVAEIESLIQQRLDARKAKDWAAADAARDRLNEMGIVLEDGPQGTTWRRK</sequence>
<name>SYC_KLEP3</name>
<evidence type="ECO:0000255" key="1">
    <source>
        <dbReference type="HAMAP-Rule" id="MF_00041"/>
    </source>
</evidence>